<accession>Q15ZV8</accession>
<keyword id="KW-0687">Ribonucleoprotein</keyword>
<keyword id="KW-0689">Ribosomal protein</keyword>
<name>RL28_PSEA6</name>
<evidence type="ECO:0000255" key="1">
    <source>
        <dbReference type="HAMAP-Rule" id="MF_00373"/>
    </source>
</evidence>
<evidence type="ECO:0000305" key="2"/>
<protein>
    <recommendedName>
        <fullName evidence="1">Large ribosomal subunit protein bL28</fullName>
    </recommendedName>
    <alternativeName>
        <fullName evidence="2">50S ribosomal protein L28</fullName>
    </alternativeName>
</protein>
<comment type="similarity">
    <text evidence="1">Belongs to the bacterial ribosomal protein bL28 family.</text>
</comment>
<gene>
    <name evidence="1" type="primary">rpmB</name>
    <name type="ordered locus">Patl_0048</name>
</gene>
<dbReference type="EMBL" id="CP000388">
    <property type="protein sequence ID" value="ABG38580.1"/>
    <property type="molecule type" value="Genomic_DNA"/>
</dbReference>
<dbReference type="RefSeq" id="WP_006993455.1">
    <property type="nucleotide sequence ID" value="NC_008228.1"/>
</dbReference>
<dbReference type="SMR" id="Q15ZV8"/>
<dbReference type="STRING" id="342610.Patl_0048"/>
<dbReference type="KEGG" id="pat:Patl_0048"/>
<dbReference type="eggNOG" id="COG0227">
    <property type="taxonomic scope" value="Bacteria"/>
</dbReference>
<dbReference type="HOGENOM" id="CLU_064548_3_1_6"/>
<dbReference type="OrthoDB" id="9805609at2"/>
<dbReference type="Proteomes" id="UP000001981">
    <property type="component" value="Chromosome"/>
</dbReference>
<dbReference type="GO" id="GO:0022625">
    <property type="term" value="C:cytosolic large ribosomal subunit"/>
    <property type="evidence" value="ECO:0007669"/>
    <property type="project" value="TreeGrafter"/>
</dbReference>
<dbReference type="GO" id="GO:0003735">
    <property type="term" value="F:structural constituent of ribosome"/>
    <property type="evidence" value="ECO:0007669"/>
    <property type="project" value="InterPro"/>
</dbReference>
<dbReference type="GO" id="GO:0006412">
    <property type="term" value="P:translation"/>
    <property type="evidence" value="ECO:0007669"/>
    <property type="project" value="UniProtKB-UniRule"/>
</dbReference>
<dbReference type="FunFam" id="2.30.170.40:FF:000001">
    <property type="entry name" value="50S ribosomal protein L28"/>
    <property type="match status" value="1"/>
</dbReference>
<dbReference type="Gene3D" id="2.30.170.40">
    <property type="entry name" value="Ribosomal protein L28/L24"/>
    <property type="match status" value="1"/>
</dbReference>
<dbReference type="HAMAP" id="MF_00373">
    <property type="entry name" value="Ribosomal_bL28"/>
    <property type="match status" value="1"/>
</dbReference>
<dbReference type="InterPro" id="IPR026569">
    <property type="entry name" value="Ribosomal_bL28"/>
</dbReference>
<dbReference type="InterPro" id="IPR034704">
    <property type="entry name" value="Ribosomal_bL28/bL31-like_sf"/>
</dbReference>
<dbReference type="InterPro" id="IPR001383">
    <property type="entry name" value="Ribosomal_bL28_bact-type"/>
</dbReference>
<dbReference type="InterPro" id="IPR037147">
    <property type="entry name" value="Ribosomal_bL28_sf"/>
</dbReference>
<dbReference type="NCBIfam" id="TIGR00009">
    <property type="entry name" value="L28"/>
    <property type="match status" value="1"/>
</dbReference>
<dbReference type="PANTHER" id="PTHR13528">
    <property type="entry name" value="39S RIBOSOMAL PROTEIN L28, MITOCHONDRIAL"/>
    <property type="match status" value="1"/>
</dbReference>
<dbReference type="PANTHER" id="PTHR13528:SF2">
    <property type="entry name" value="LARGE RIBOSOMAL SUBUNIT PROTEIN BL28M"/>
    <property type="match status" value="1"/>
</dbReference>
<dbReference type="Pfam" id="PF00830">
    <property type="entry name" value="Ribosomal_L28"/>
    <property type="match status" value="1"/>
</dbReference>
<dbReference type="SUPFAM" id="SSF143800">
    <property type="entry name" value="L28p-like"/>
    <property type="match status" value="1"/>
</dbReference>
<proteinExistence type="inferred from homology"/>
<reference key="1">
    <citation type="submission" date="2006-06" db="EMBL/GenBank/DDBJ databases">
        <title>Complete sequence of Pseudoalteromonas atlantica T6c.</title>
        <authorList>
            <consortium name="US DOE Joint Genome Institute"/>
            <person name="Copeland A."/>
            <person name="Lucas S."/>
            <person name="Lapidus A."/>
            <person name="Barry K."/>
            <person name="Detter J.C."/>
            <person name="Glavina del Rio T."/>
            <person name="Hammon N."/>
            <person name="Israni S."/>
            <person name="Dalin E."/>
            <person name="Tice H."/>
            <person name="Pitluck S."/>
            <person name="Saunders E."/>
            <person name="Brettin T."/>
            <person name="Bruce D."/>
            <person name="Han C."/>
            <person name="Tapia R."/>
            <person name="Gilna P."/>
            <person name="Schmutz J."/>
            <person name="Larimer F."/>
            <person name="Land M."/>
            <person name="Hauser L."/>
            <person name="Kyrpides N."/>
            <person name="Kim E."/>
            <person name="Karls A.C."/>
            <person name="Bartlett D."/>
            <person name="Higgins B.P."/>
            <person name="Richardson P."/>
        </authorList>
    </citation>
    <scope>NUCLEOTIDE SEQUENCE [LARGE SCALE GENOMIC DNA]</scope>
    <source>
        <strain>T6c / ATCC BAA-1087</strain>
    </source>
</reference>
<feature type="chain" id="PRO_1000007310" description="Large ribosomal subunit protein bL28">
    <location>
        <begin position="1"/>
        <end position="78"/>
    </location>
</feature>
<sequence length="78" mass="8918">MSKVCIVTGKRPAVGNNRSHAKNSTRRRFLPNLQTHRFWVESENRFVKLRLSAKGMRIIDKKGIDSVLTDIRANGVKI</sequence>
<organism>
    <name type="scientific">Pseudoalteromonas atlantica (strain T6c / ATCC BAA-1087)</name>
    <dbReference type="NCBI Taxonomy" id="3042615"/>
    <lineage>
        <taxon>Bacteria</taxon>
        <taxon>Pseudomonadati</taxon>
        <taxon>Pseudomonadota</taxon>
        <taxon>Gammaproteobacteria</taxon>
        <taxon>Alteromonadales</taxon>
        <taxon>Alteromonadaceae</taxon>
        <taxon>Paraglaciecola</taxon>
    </lineage>
</organism>